<evidence type="ECO:0000250" key="1"/>
<evidence type="ECO:0000305" key="2"/>
<name>GRST_ANEMI</name>
<reference key="1">
    <citation type="journal article" date="1989" name="J. Bacteriol.">
        <title>Gramicidin S biosynthesis operon containing the structural genes grsA and grsB has an open reading frame encoding a protein homologous to fatty acid thioesterases.</title>
        <authorList>
            <person name="Kraetzschmar J."/>
            <person name="Krause M."/>
            <person name="Marahiel M.A."/>
        </authorList>
    </citation>
    <scope>NUCLEOTIDE SEQUENCE [GENOMIC DNA]</scope>
    <source>
        <strain>ATCC 9999 / DSM 2895 / JCM 8504 / NBRC 15520 / NCIMB 7096 / NCTC 7096</strain>
    </source>
</reference>
<reference key="2">
    <citation type="journal article" date="1994" name="J. Bacteriol.">
        <title>Induction of surfactin production in Bacillus subtilis by gsp, a gene located upstream of the gramicidin S operon in Bacillus brevis.</title>
        <authorList>
            <person name="Borchert S."/>
            <person name="Stachelhaus T."/>
            <person name="Marahiel M.A."/>
        </authorList>
    </citation>
    <scope>NUCLEOTIDE SEQUENCE [GENOMIC DNA] OF 1-32</scope>
    <source>
        <strain>ATCC 9999 / DSM 2895 / JCM 8504 / NBRC 15520 / NCIMB 7096 / NCTC 7096</strain>
    </source>
</reference>
<organism>
    <name type="scientific">Aneurinibacillus migulanus</name>
    <name type="common">Bacillus migulanus</name>
    <dbReference type="NCBI Taxonomy" id="47500"/>
    <lineage>
        <taxon>Bacteria</taxon>
        <taxon>Bacillati</taxon>
        <taxon>Bacillota</taxon>
        <taxon>Bacilli</taxon>
        <taxon>Bacillales</taxon>
        <taxon>Paenibacillaceae</taxon>
        <taxon>Aneurinibacillus group</taxon>
        <taxon>Aneurinibacillus</taxon>
    </lineage>
</organism>
<dbReference type="EC" id="3.1.2.-"/>
<dbReference type="EMBL" id="M29703">
    <property type="protein sequence ID" value="AAA58717.1"/>
    <property type="molecule type" value="Genomic_DNA"/>
</dbReference>
<dbReference type="EMBL" id="X15577">
    <property type="protein sequence ID" value="CAA33602.1"/>
    <property type="molecule type" value="Genomic_DNA"/>
</dbReference>
<dbReference type="PIR" id="B33593">
    <property type="entry name" value="B55218"/>
</dbReference>
<dbReference type="RefSeq" id="WP_043064677.1">
    <property type="nucleotide sequence ID" value="NZ_BJOA01000132.1"/>
</dbReference>
<dbReference type="SMR" id="P14686"/>
<dbReference type="STRING" id="47500.AF333_17655"/>
<dbReference type="ESTHER" id="bacbr-grst">
    <property type="family name" value="Thioesterase"/>
</dbReference>
<dbReference type="GeneID" id="42306990"/>
<dbReference type="OrthoDB" id="2213423at2"/>
<dbReference type="UniPathway" id="UPA00102"/>
<dbReference type="GO" id="GO:0016787">
    <property type="term" value="F:hydrolase activity"/>
    <property type="evidence" value="ECO:0007669"/>
    <property type="project" value="UniProtKB-KW"/>
</dbReference>
<dbReference type="GO" id="GO:0017000">
    <property type="term" value="P:antibiotic biosynthetic process"/>
    <property type="evidence" value="ECO:0007669"/>
    <property type="project" value="UniProtKB-KW"/>
</dbReference>
<dbReference type="GO" id="GO:0008610">
    <property type="term" value="P:lipid biosynthetic process"/>
    <property type="evidence" value="ECO:0007669"/>
    <property type="project" value="TreeGrafter"/>
</dbReference>
<dbReference type="Gene3D" id="3.40.50.1820">
    <property type="entry name" value="alpha/beta hydrolase"/>
    <property type="match status" value="1"/>
</dbReference>
<dbReference type="InterPro" id="IPR029058">
    <property type="entry name" value="AB_hydrolase_fold"/>
</dbReference>
<dbReference type="InterPro" id="IPR012223">
    <property type="entry name" value="TEII"/>
</dbReference>
<dbReference type="InterPro" id="IPR001031">
    <property type="entry name" value="Thioesterase"/>
</dbReference>
<dbReference type="PANTHER" id="PTHR11487:SF0">
    <property type="entry name" value="S-ACYL FATTY ACID SYNTHASE THIOESTERASE, MEDIUM CHAIN"/>
    <property type="match status" value="1"/>
</dbReference>
<dbReference type="PANTHER" id="PTHR11487">
    <property type="entry name" value="THIOESTERASE"/>
    <property type="match status" value="1"/>
</dbReference>
<dbReference type="Pfam" id="PF00975">
    <property type="entry name" value="Thioesterase"/>
    <property type="match status" value="1"/>
</dbReference>
<dbReference type="SUPFAM" id="SSF53474">
    <property type="entry name" value="alpha/beta-Hydrolases"/>
    <property type="match status" value="1"/>
</dbReference>
<gene>
    <name type="primary">grsT</name>
</gene>
<accession>P14686</accession>
<protein>
    <recommendedName>
        <fullName>Gramicidin S biosynthesis protein GrsT</fullName>
        <ecNumber>3.1.2.-</ecNumber>
    </recommendedName>
</protein>
<comment type="function">
    <text>Probable thioesterase involved in the biosynthesis of gramicidin S.</text>
</comment>
<comment type="pathway">
    <text>Antibiotic biosynthesis; gramicidin S biosynthesis.</text>
</comment>
<comment type="similarity">
    <text evidence="2">Belongs to the thioesterase family.</text>
</comment>
<sequence>MTFISQVNKWFVNANVNSAAKLRLFCIPYAGGGASAFYEWSHFFPKEIEVCSIQLPGRENRGAEVPLTNLQQIVEIVAEEIQPLINIPFAFLGHSMGALISFELARTIRQKSNVNPVHLFVSGRHAPQIPCAKQDYHLLPDEQFIQELRSLNGTPEIVLQDAEMMSILLPRLRADFSVCGSYQYKNDEPFECPITAFGGKNDNGVTYQSLEAWREQTKREFSVCMYPGDHFFLYESKYEMIEFMCKQLRLVLAPKI</sequence>
<keyword id="KW-0045">Antibiotic biosynthesis</keyword>
<keyword id="KW-0378">Hydrolase</keyword>
<feature type="chain" id="PRO_0000180362" description="Gramicidin S biosynthesis protein GrsT">
    <location>
        <begin position="1"/>
        <end position="256"/>
    </location>
</feature>
<feature type="active site" evidence="1">
    <location>
        <position position="95"/>
    </location>
</feature>
<proteinExistence type="inferred from homology"/>